<keyword id="KW-0067">ATP-binding</keyword>
<keyword id="KW-1003">Cell membrane</keyword>
<keyword id="KW-0418">Kinase</keyword>
<keyword id="KW-0472">Membrane</keyword>
<keyword id="KW-0547">Nucleotide-binding</keyword>
<keyword id="KW-0597">Phosphoprotein</keyword>
<keyword id="KW-1185">Reference proteome</keyword>
<keyword id="KW-0808">Transferase</keyword>
<keyword id="KW-0812">Transmembrane</keyword>
<keyword id="KW-1133">Transmembrane helix</keyword>
<keyword id="KW-0902">Two-component regulatory system</keyword>
<protein>
    <recommendedName>
        <fullName>Sensor protein LytS</fullName>
        <ecNumber>2.7.13.3</ecNumber>
    </recommendedName>
</protein>
<proteinExistence type="inferred from homology"/>
<gene>
    <name type="primary">lytS</name>
    <name type="ordered locus">EF_3197</name>
</gene>
<comment type="function">
    <text>Member of the two-component regulatory system LytS/LytT that probably regulates genes involved in cell wall metabolism.</text>
</comment>
<comment type="catalytic activity">
    <reaction>
        <text>ATP + protein L-histidine = ADP + protein N-phospho-L-histidine.</text>
        <dbReference type="EC" id="2.7.13.3"/>
    </reaction>
</comment>
<comment type="subcellular location">
    <subcellularLocation>
        <location evidence="3">Cell membrane</location>
        <topology evidence="3">Multi-pass membrane protein</topology>
    </subcellularLocation>
</comment>
<evidence type="ECO:0000250" key="1"/>
<evidence type="ECO:0000255" key="2"/>
<evidence type="ECO:0000305" key="3"/>
<reference key="1">
    <citation type="journal article" date="2003" name="Science">
        <title>Role of mobile DNA in the evolution of vancomycin-resistant Enterococcus faecalis.</title>
        <authorList>
            <person name="Paulsen I.T."/>
            <person name="Banerjei L."/>
            <person name="Myers G.S.A."/>
            <person name="Nelson K.E."/>
            <person name="Seshadri R."/>
            <person name="Read T.D."/>
            <person name="Fouts D.E."/>
            <person name="Eisen J.A."/>
            <person name="Gill S.R."/>
            <person name="Heidelberg J.F."/>
            <person name="Tettelin H."/>
            <person name="Dodson R.J."/>
            <person name="Umayam L.A."/>
            <person name="Brinkac L.M."/>
            <person name="Beanan M.J."/>
            <person name="Daugherty S.C."/>
            <person name="DeBoy R.T."/>
            <person name="Durkin S.A."/>
            <person name="Kolonay J.F."/>
            <person name="Madupu R."/>
            <person name="Nelson W.C."/>
            <person name="Vamathevan J.J."/>
            <person name="Tran B."/>
            <person name="Upton J."/>
            <person name="Hansen T."/>
            <person name="Shetty J."/>
            <person name="Khouri H.M."/>
            <person name="Utterback T.R."/>
            <person name="Radune D."/>
            <person name="Ketchum K.A."/>
            <person name="Dougherty B.A."/>
            <person name="Fraser C.M."/>
        </authorList>
    </citation>
    <scope>NUCLEOTIDE SEQUENCE [LARGE SCALE GENOMIC DNA]</scope>
    <source>
        <strain>ATCC 700802 / V583</strain>
    </source>
</reference>
<sequence>MVELFILMMERVGLIILLAFLLVNVPYFKRVLLSREKMSSKVQLILIFGLFAIISNFTGIEIAKNQIVPNNLLTYLSSNASIANTRTLVIGVSGLVGGPIVGSAVGLIAGFHRVIQGGGHSFFYVPASLIVGLIAGFLGSRMAKQTVFPSAGFSAIVGACMEMIQMIFIFFFSGDLSDGATLVRFIALPMILLNSVGTFIFMSILTTTLKQEEQAKAVQTHDVLELAAETLPYFREGLNKNSSKKVAEIIKHYTKVSAISMTNSHQILAHVGAGSDHHIPELEVITELSREVLRTGRMTIAHAKEEVGCSDPNCPLQAAIVIPLFSHQQIVGTLKMYFTDPAQLTHVEEQLAEGLGTIFSSQIELGEAEVQSKLLKEAEIKSLQAQVNPHFFFNAINTISALMRKDSEKARKLLLQLSKYFRGNLQGAVQTTIPVSQELEQVKAYLSLEQARFPNRYQVTFDVEEAVASEKVPPYAIQVLVENTIKHAFGSRKENNQVRVVVKAKQHKLHVDVYDNGQGIPEERRLLLGKTTVTSEKGTGTALENLSRRMANLYGSEGCFLIENLETGGSHVHLEIPMEQEELDARINR</sequence>
<feature type="chain" id="PRO_0000074790" description="Sensor protein LytS">
    <location>
        <begin position="1"/>
        <end position="589"/>
    </location>
</feature>
<feature type="transmembrane region" description="Helical" evidence="2">
    <location>
        <begin position="4"/>
        <end position="23"/>
    </location>
</feature>
<feature type="transmembrane region" description="Helical" evidence="2">
    <location>
        <begin position="44"/>
        <end position="63"/>
    </location>
</feature>
<feature type="transmembrane region" description="Helical" evidence="2">
    <location>
        <begin position="89"/>
        <end position="111"/>
    </location>
</feature>
<feature type="transmembrane region" description="Helical" evidence="2">
    <location>
        <begin position="118"/>
        <end position="140"/>
    </location>
</feature>
<feature type="transmembrane region" description="Helical" evidence="2">
    <location>
        <begin position="150"/>
        <end position="172"/>
    </location>
</feature>
<feature type="transmembrane region" description="Helical" evidence="2">
    <location>
        <begin position="185"/>
        <end position="207"/>
    </location>
</feature>
<feature type="domain" description="GAF">
    <location>
        <begin position="238"/>
        <end position="363"/>
    </location>
</feature>
<feature type="domain" description="Histidine kinase">
    <location>
        <begin position="363"/>
        <end position="580"/>
    </location>
</feature>
<feature type="modified residue" description="Phosphohistidine; by autocatalysis" evidence="1">
    <location>
        <position position="390"/>
    </location>
</feature>
<accession>Q82Z75</accession>
<dbReference type="EC" id="2.7.13.3"/>
<dbReference type="EMBL" id="AE016830">
    <property type="protein sequence ID" value="AAO82869.1"/>
    <property type="molecule type" value="Genomic_DNA"/>
</dbReference>
<dbReference type="RefSeq" id="NP_816799.1">
    <property type="nucleotide sequence ID" value="NC_004668.1"/>
</dbReference>
<dbReference type="RefSeq" id="WP_002354827.1">
    <property type="nucleotide sequence ID" value="NZ_KE136524.1"/>
</dbReference>
<dbReference type="SMR" id="Q82Z75"/>
<dbReference type="STRING" id="226185.EF_3197"/>
<dbReference type="EnsemblBacteria" id="AAO82869">
    <property type="protein sequence ID" value="AAO82869"/>
    <property type="gene ID" value="EF_3197"/>
</dbReference>
<dbReference type="KEGG" id="efa:EF3197"/>
<dbReference type="PATRIC" id="fig|226185.45.peg.383"/>
<dbReference type="eggNOG" id="COG3275">
    <property type="taxonomic scope" value="Bacteria"/>
</dbReference>
<dbReference type="HOGENOM" id="CLU_020473_3_3_9"/>
<dbReference type="Proteomes" id="UP000001415">
    <property type="component" value="Chromosome"/>
</dbReference>
<dbReference type="GO" id="GO:0005886">
    <property type="term" value="C:plasma membrane"/>
    <property type="evidence" value="ECO:0007669"/>
    <property type="project" value="UniProtKB-SubCell"/>
</dbReference>
<dbReference type="GO" id="GO:0005524">
    <property type="term" value="F:ATP binding"/>
    <property type="evidence" value="ECO:0007669"/>
    <property type="project" value="UniProtKB-KW"/>
</dbReference>
<dbReference type="GO" id="GO:0000155">
    <property type="term" value="F:phosphorelay sensor kinase activity"/>
    <property type="evidence" value="ECO:0007669"/>
    <property type="project" value="InterPro"/>
</dbReference>
<dbReference type="GO" id="GO:0071555">
    <property type="term" value="P:cell wall organization"/>
    <property type="evidence" value="ECO:0007669"/>
    <property type="project" value="InterPro"/>
</dbReference>
<dbReference type="CDD" id="cd16957">
    <property type="entry name" value="HATPase_LytS-like"/>
    <property type="match status" value="1"/>
</dbReference>
<dbReference type="Gene3D" id="3.30.450.40">
    <property type="match status" value="1"/>
</dbReference>
<dbReference type="Gene3D" id="3.30.565.10">
    <property type="entry name" value="Histidine kinase-like ATPase, C-terminal domain"/>
    <property type="match status" value="1"/>
</dbReference>
<dbReference type="InterPro" id="IPR050640">
    <property type="entry name" value="Bact_2-comp_sensor_kinase"/>
</dbReference>
<dbReference type="InterPro" id="IPR003018">
    <property type="entry name" value="GAF"/>
</dbReference>
<dbReference type="InterPro" id="IPR029016">
    <property type="entry name" value="GAF-like_dom_sf"/>
</dbReference>
<dbReference type="InterPro" id="IPR036890">
    <property type="entry name" value="HATPase_C_sf"/>
</dbReference>
<dbReference type="InterPro" id="IPR010559">
    <property type="entry name" value="Sig_transdc_His_kin_internal"/>
</dbReference>
<dbReference type="InterPro" id="IPR011620">
    <property type="entry name" value="Sig_transdc_His_kinase_LytS_TM"/>
</dbReference>
<dbReference type="PANTHER" id="PTHR34220">
    <property type="entry name" value="SENSOR HISTIDINE KINASE YPDA"/>
    <property type="match status" value="1"/>
</dbReference>
<dbReference type="PANTHER" id="PTHR34220:SF7">
    <property type="entry name" value="SENSOR HISTIDINE KINASE YPDA"/>
    <property type="match status" value="1"/>
</dbReference>
<dbReference type="Pfam" id="PF07694">
    <property type="entry name" value="5TM-5TMR_LYT"/>
    <property type="match status" value="1"/>
</dbReference>
<dbReference type="Pfam" id="PF02518">
    <property type="entry name" value="HATPase_c"/>
    <property type="match status" value="1"/>
</dbReference>
<dbReference type="Pfam" id="PF06580">
    <property type="entry name" value="His_kinase"/>
    <property type="match status" value="1"/>
</dbReference>
<dbReference type="SMART" id="SM00065">
    <property type="entry name" value="GAF"/>
    <property type="match status" value="1"/>
</dbReference>
<dbReference type="SUPFAM" id="SSF55874">
    <property type="entry name" value="ATPase domain of HSP90 chaperone/DNA topoisomerase II/histidine kinase"/>
    <property type="match status" value="1"/>
</dbReference>
<dbReference type="SUPFAM" id="SSF55781">
    <property type="entry name" value="GAF domain-like"/>
    <property type="match status" value="1"/>
</dbReference>
<organism>
    <name type="scientific">Enterococcus faecalis (strain ATCC 700802 / V583)</name>
    <dbReference type="NCBI Taxonomy" id="226185"/>
    <lineage>
        <taxon>Bacteria</taxon>
        <taxon>Bacillati</taxon>
        <taxon>Bacillota</taxon>
        <taxon>Bacilli</taxon>
        <taxon>Lactobacillales</taxon>
        <taxon>Enterococcaceae</taxon>
        <taxon>Enterococcus</taxon>
    </lineage>
</organism>
<name>LYTS_ENTFA</name>